<evidence type="ECO:0000255" key="1">
    <source>
        <dbReference type="HAMAP-Rule" id="MF_01611"/>
    </source>
</evidence>
<evidence type="ECO:0000255" key="2">
    <source>
        <dbReference type="PROSITE-ProRule" id="PRU01266"/>
    </source>
</evidence>
<dbReference type="EC" id="4.3.1.32" evidence="1"/>
<dbReference type="EMBL" id="AP008231">
    <property type="protein sequence ID" value="BAD78838.1"/>
    <property type="molecule type" value="Genomic_DNA"/>
</dbReference>
<dbReference type="RefSeq" id="WP_011242960.1">
    <property type="nucleotide sequence ID" value="NZ_CP085785.1"/>
</dbReference>
<dbReference type="SMR" id="Q5N4D1"/>
<dbReference type="GeneID" id="72429741"/>
<dbReference type="KEGG" id="syc:syc0648_d"/>
<dbReference type="eggNOG" id="COG1060">
    <property type="taxonomic scope" value="Bacteria"/>
</dbReference>
<dbReference type="UniPathway" id="UPA00072"/>
<dbReference type="Proteomes" id="UP000001175">
    <property type="component" value="Chromosome"/>
</dbReference>
<dbReference type="GO" id="GO:0051539">
    <property type="term" value="F:4 iron, 4 sulfur cluster binding"/>
    <property type="evidence" value="ECO:0007669"/>
    <property type="project" value="UniProtKB-KW"/>
</dbReference>
<dbReference type="GO" id="GO:0044689">
    <property type="term" value="F:7,8-didemethyl-8-hydroxy-5-deazariboflavin synthase activity"/>
    <property type="evidence" value="ECO:0007669"/>
    <property type="project" value="UniProtKB-EC"/>
</dbReference>
<dbReference type="GO" id="GO:0005506">
    <property type="term" value="F:iron ion binding"/>
    <property type="evidence" value="ECO:0007669"/>
    <property type="project" value="UniProtKB-UniRule"/>
</dbReference>
<dbReference type="GO" id="GO:0016765">
    <property type="term" value="F:transferase activity, transferring alkyl or aryl (other than methyl) groups"/>
    <property type="evidence" value="ECO:0007669"/>
    <property type="project" value="InterPro"/>
</dbReference>
<dbReference type="CDD" id="cd01335">
    <property type="entry name" value="Radical_SAM"/>
    <property type="match status" value="1"/>
</dbReference>
<dbReference type="Gene3D" id="3.20.20.70">
    <property type="entry name" value="Aldolase class I"/>
    <property type="match status" value="1"/>
</dbReference>
<dbReference type="HAMAP" id="MF_01611">
    <property type="entry name" value="FO_synth_sub1"/>
    <property type="match status" value="1"/>
</dbReference>
<dbReference type="InterPro" id="IPR013785">
    <property type="entry name" value="Aldolase_TIM"/>
</dbReference>
<dbReference type="InterPro" id="IPR019939">
    <property type="entry name" value="CofG_family"/>
</dbReference>
<dbReference type="InterPro" id="IPR006638">
    <property type="entry name" value="Elp3/MiaA/NifB-like_rSAM"/>
</dbReference>
<dbReference type="InterPro" id="IPR034405">
    <property type="entry name" value="F420"/>
</dbReference>
<dbReference type="InterPro" id="IPR007197">
    <property type="entry name" value="rSAM"/>
</dbReference>
<dbReference type="NCBIfam" id="TIGR03550">
    <property type="entry name" value="F420_cofG"/>
    <property type="match status" value="1"/>
</dbReference>
<dbReference type="NCBIfam" id="NF004884">
    <property type="entry name" value="PRK06245.1"/>
    <property type="match status" value="1"/>
</dbReference>
<dbReference type="PANTHER" id="PTHR43076:SF15">
    <property type="entry name" value="7,8-DIDEMETHYL-8-HYDROXY-5-DEAZARIBOFLAVIN SYNTHASE"/>
    <property type="match status" value="1"/>
</dbReference>
<dbReference type="PANTHER" id="PTHR43076">
    <property type="entry name" value="FO SYNTHASE (COFH)"/>
    <property type="match status" value="1"/>
</dbReference>
<dbReference type="Pfam" id="PF04055">
    <property type="entry name" value="Radical_SAM"/>
    <property type="match status" value="1"/>
</dbReference>
<dbReference type="SFLD" id="SFLDF00294">
    <property type="entry name" value="7_8-didemethyl-8-hydroxy-5-dea"/>
    <property type="match status" value="1"/>
</dbReference>
<dbReference type="SFLD" id="SFLDG01388">
    <property type="entry name" value="7_8-didemethyl-8-hydroxy-5-dea"/>
    <property type="match status" value="1"/>
</dbReference>
<dbReference type="SMART" id="SM00729">
    <property type="entry name" value="Elp3"/>
    <property type="match status" value="1"/>
</dbReference>
<dbReference type="SUPFAM" id="SSF102114">
    <property type="entry name" value="Radical SAM enzymes"/>
    <property type="match status" value="1"/>
</dbReference>
<dbReference type="PROSITE" id="PS51918">
    <property type="entry name" value="RADICAL_SAM"/>
    <property type="match status" value="1"/>
</dbReference>
<name>COFG_SYNP6</name>
<accession>Q5N4D1</accession>
<keyword id="KW-0004">4Fe-4S</keyword>
<keyword id="KW-0408">Iron</keyword>
<keyword id="KW-0411">Iron-sulfur</keyword>
<keyword id="KW-0456">Lyase</keyword>
<keyword id="KW-0479">Metal-binding</keyword>
<keyword id="KW-0949">S-adenosyl-L-methionine</keyword>
<protein>
    <recommendedName>
        <fullName evidence="1">7,8-didemethyl-8-hydroxy-5-deazariboflavin synthase</fullName>
        <ecNumber evidence="1">4.3.1.32</ecNumber>
    </recommendedName>
    <alternativeName>
        <fullName evidence="1">FO synthase subunit 1</fullName>
    </alternativeName>
</protein>
<organism>
    <name type="scientific">Synechococcus sp. (strain ATCC 27144 / PCC 6301 / SAUG 1402/1)</name>
    <name type="common">Anacystis nidulans</name>
    <dbReference type="NCBI Taxonomy" id="269084"/>
    <lineage>
        <taxon>Bacteria</taxon>
        <taxon>Bacillati</taxon>
        <taxon>Cyanobacteriota</taxon>
        <taxon>Cyanophyceae</taxon>
        <taxon>Synechococcales</taxon>
        <taxon>Synechococcaceae</taxon>
        <taxon>Synechococcus</taxon>
    </lineage>
</organism>
<sequence>MKHFSDQTWRSPQQSAVITYSPAYTLVPTYECFNRCTYCNFRRDPGMDEWLSLSTAQQRLLTVRDRGVCEVLILSGEVHPQSPRRAAWRQRLIELAELALDMGFLPHTNAGPLNRAEMIALQNVNVSLGLMLEQLTPQLQRTVHRAAPSKDPQLRLQQLEQAGELGIPFTTGLLLGIGETSRDRLETLEAIAACHDRWGHIQEVILQPHSPGRQQAIQHPPLAPDELIDCVAIARQVLPTSIAIQVPPNLLTQPQQLADCLGAGARDLGGIVPYDEVNPDYQHHDLDELREALAQQGWQLQPRLPVYPHLVDRLPQRLQTHVAAWLNRFNSQSRSS</sequence>
<reference key="1">
    <citation type="journal article" date="2007" name="Photosyn. Res.">
        <title>Complete nucleotide sequence of the freshwater unicellular cyanobacterium Synechococcus elongatus PCC 6301 chromosome: gene content and organization.</title>
        <authorList>
            <person name="Sugita C."/>
            <person name="Ogata K."/>
            <person name="Shikata M."/>
            <person name="Jikuya H."/>
            <person name="Takano J."/>
            <person name="Furumichi M."/>
            <person name="Kanehisa M."/>
            <person name="Omata T."/>
            <person name="Sugiura M."/>
            <person name="Sugita M."/>
        </authorList>
    </citation>
    <scope>NUCLEOTIDE SEQUENCE [LARGE SCALE GENOMIC DNA]</scope>
    <source>
        <strain>ATCC 27144 / PCC 6301 / SAUG 1402/1</strain>
    </source>
</reference>
<proteinExistence type="inferred from homology"/>
<comment type="function">
    <text evidence="1">Catalyzes the radical-mediated synthesis of 7,8-didemethyl-8-hydroxy-5-deazariboflavin from 5-amino-5-(4-hydroxybenzyl)-6-(D-ribitylimino)-5,6-dihydrouracil.</text>
</comment>
<comment type="catalytic activity">
    <reaction evidence="1">
        <text>5-amino-5-(4-hydroxybenzyl)-6-(D-ribitylimino)-5,6-dihydrouracil + S-adenosyl-L-methionine = 7,8-didemethyl-8-hydroxy-5-deazariboflavin + 5'-deoxyadenosine + L-methionine + NH4(+) + H(+)</text>
        <dbReference type="Rhea" id="RHEA:55204"/>
        <dbReference type="ChEBI" id="CHEBI:15378"/>
        <dbReference type="ChEBI" id="CHEBI:17319"/>
        <dbReference type="ChEBI" id="CHEBI:28938"/>
        <dbReference type="ChEBI" id="CHEBI:57844"/>
        <dbReference type="ChEBI" id="CHEBI:59789"/>
        <dbReference type="ChEBI" id="CHEBI:59904"/>
        <dbReference type="ChEBI" id="CHEBI:85936"/>
        <dbReference type="EC" id="4.3.1.32"/>
    </reaction>
</comment>
<comment type="cofactor">
    <cofactor evidence="1">
        <name>[4Fe-4S] cluster</name>
        <dbReference type="ChEBI" id="CHEBI:49883"/>
    </cofactor>
    <text evidence="1">Binds 1 [4Fe-4S] cluster. The cluster is coordinated with 3 cysteines and an exchangeable S-adenosyl-L-methionine.</text>
</comment>
<comment type="pathway">
    <text evidence="1">Cofactor biosynthesis; coenzyme F0 biosynthesis.</text>
</comment>
<comment type="subunit">
    <text evidence="1">Consists of two subunits, CofG and CofH.</text>
</comment>
<comment type="similarity">
    <text evidence="1">Belongs to the radical SAM superfamily. CofG family.</text>
</comment>
<gene>
    <name evidence="1" type="primary">cofG</name>
    <name type="ordered locus">syc0648_d</name>
</gene>
<feature type="chain" id="PRO_0000147758" description="7,8-didemethyl-8-hydroxy-5-deazariboflavin synthase">
    <location>
        <begin position="1"/>
        <end position="336"/>
    </location>
</feature>
<feature type="domain" description="Radical SAM core" evidence="2">
    <location>
        <begin position="18"/>
        <end position="249"/>
    </location>
</feature>
<feature type="binding site" evidence="1">
    <location>
        <position position="32"/>
    </location>
    <ligand>
        <name>[4Fe-4S] cluster</name>
        <dbReference type="ChEBI" id="CHEBI:49883"/>
        <note>4Fe-4S-S-AdoMet</note>
    </ligand>
</feature>
<feature type="binding site" evidence="1">
    <location>
        <position position="36"/>
    </location>
    <ligand>
        <name>[4Fe-4S] cluster</name>
        <dbReference type="ChEBI" id="CHEBI:49883"/>
        <note>4Fe-4S-S-AdoMet</note>
    </ligand>
</feature>
<feature type="binding site" evidence="1">
    <location>
        <position position="39"/>
    </location>
    <ligand>
        <name>[4Fe-4S] cluster</name>
        <dbReference type="ChEBI" id="CHEBI:49883"/>
        <note>4Fe-4S-S-AdoMet</note>
    </ligand>
</feature>